<proteinExistence type="inferred from homology"/>
<accession>Q87U40</accession>
<sequence>MTQHSPAFVTPDWLEREQLTDTPTPVFFGWLFNQQSLTRRLDRLSDGGFDIVPLSEGWQALRDDECAALGLPAASEGWVREVYLRGNGENWVFARSVAARDALQHGGLHMDELGTRSLGALLFSDPAFDRGTLQVCHYPQSWLPDADAVSGLWARRSQFSRGALSVLVAEVFLPALWNAIHNKDHA</sequence>
<reference key="1">
    <citation type="journal article" date="2003" name="Proc. Natl. Acad. Sci. U.S.A.">
        <title>The complete genome sequence of the Arabidopsis and tomato pathogen Pseudomonas syringae pv. tomato DC3000.</title>
        <authorList>
            <person name="Buell C.R."/>
            <person name="Joardar V."/>
            <person name="Lindeberg M."/>
            <person name="Selengut J."/>
            <person name="Paulsen I.T."/>
            <person name="Gwinn M.L."/>
            <person name="Dodson R.J."/>
            <person name="DeBoy R.T."/>
            <person name="Durkin A.S."/>
            <person name="Kolonay J.F."/>
            <person name="Madupu R."/>
            <person name="Daugherty S.C."/>
            <person name="Brinkac L.M."/>
            <person name="Beanan M.J."/>
            <person name="Haft D.H."/>
            <person name="Nelson W.C."/>
            <person name="Davidsen T.M."/>
            <person name="Zafar N."/>
            <person name="Zhou L."/>
            <person name="Liu J."/>
            <person name="Yuan Q."/>
            <person name="Khouri H.M."/>
            <person name="Fedorova N.B."/>
            <person name="Tran B."/>
            <person name="Russell D."/>
            <person name="Berry K.J."/>
            <person name="Utterback T.R."/>
            <person name="Van Aken S.E."/>
            <person name="Feldblyum T.V."/>
            <person name="D'Ascenzo M."/>
            <person name="Deng W.-L."/>
            <person name="Ramos A.R."/>
            <person name="Alfano J.R."/>
            <person name="Cartinhour S."/>
            <person name="Chatterjee A.K."/>
            <person name="Delaney T.P."/>
            <person name="Lazarowitz S.G."/>
            <person name="Martin G.B."/>
            <person name="Schneider D.J."/>
            <person name="Tang X."/>
            <person name="Bender C.L."/>
            <person name="White O."/>
            <person name="Fraser C.M."/>
            <person name="Collmer A."/>
        </authorList>
    </citation>
    <scope>NUCLEOTIDE SEQUENCE [LARGE SCALE GENOMIC DNA]</scope>
    <source>
        <strain>ATCC BAA-871 / DC3000</strain>
    </source>
</reference>
<evidence type="ECO:0000255" key="1">
    <source>
        <dbReference type="HAMAP-Rule" id="MF_01632"/>
    </source>
</evidence>
<protein>
    <recommendedName>
        <fullName evidence="1">Probable chorismate pyruvate-lyase</fullName>
        <shortName evidence="1">CL</shortName>
        <shortName evidence="1">CPL</shortName>
        <ecNumber evidence="1">4.1.3.40</ecNumber>
    </recommendedName>
</protein>
<gene>
    <name evidence="1" type="primary">ubiC</name>
    <name type="ordered locus">PSPTO_5475</name>
</gene>
<feature type="chain" id="PRO_0000240563" description="Probable chorismate pyruvate-lyase">
    <location>
        <begin position="1"/>
        <end position="186"/>
    </location>
</feature>
<feature type="binding site" evidence="1">
    <location>
        <position position="80"/>
    </location>
    <ligand>
        <name>substrate</name>
    </ligand>
</feature>
<feature type="binding site" evidence="1">
    <location>
        <position position="118"/>
    </location>
    <ligand>
        <name>substrate</name>
    </ligand>
</feature>
<feature type="binding site" evidence="1">
    <location>
        <position position="170"/>
    </location>
    <ligand>
        <name>substrate</name>
    </ligand>
</feature>
<keyword id="KW-0963">Cytoplasm</keyword>
<keyword id="KW-0456">Lyase</keyword>
<keyword id="KW-0670">Pyruvate</keyword>
<keyword id="KW-1185">Reference proteome</keyword>
<keyword id="KW-0831">Ubiquinone biosynthesis</keyword>
<dbReference type="EC" id="4.1.3.40" evidence="1"/>
<dbReference type="EMBL" id="AE016853">
    <property type="protein sequence ID" value="AAO58894.1"/>
    <property type="molecule type" value="Genomic_DNA"/>
</dbReference>
<dbReference type="RefSeq" id="NP_795199.1">
    <property type="nucleotide sequence ID" value="NC_004578.1"/>
</dbReference>
<dbReference type="RefSeq" id="WP_011105520.1">
    <property type="nucleotide sequence ID" value="NC_004578.1"/>
</dbReference>
<dbReference type="SMR" id="Q87U40"/>
<dbReference type="STRING" id="223283.PSPTO_5475"/>
<dbReference type="GeneID" id="1187167"/>
<dbReference type="KEGG" id="pst:PSPTO_5475"/>
<dbReference type="PATRIC" id="fig|223283.9.peg.5609"/>
<dbReference type="eggNOG" id="COG3161">
    <property type="taxonomic scope" value="Bacteria"/>
</dbReference>
<dbReference type="HOGENOM" id="CLU_096824_3_0_6"/>
<dbReference type="OrthoDB" id="9789493at2"/>
<dbReference type="PhylomeDB" id="Q87U40"/>
<dbReference type="UniPathway" id="UPA00232"/>
<dbReference type="Proteomes" id="UP000002515">
    <property type="component" value="Chromosome"/>
</dbReference>
<dbReference type="GO" id="GO:0005829">
    <property type="term" value="C:cytosol"/>
    <property type="evidence" value="ECO:0007669"/>
    <property type="project" value="TreeGrafter"/>
</dbReference>
<dbReference type="GO" id="GO:0008813">
    <property type="term" value="F:chorismate lyase activity"/>
    <property type="evidence" value="ECO:0007669"/>
    <property type="project" value="UniProtKB-UniRule"/>
</dbReference>
<dbReference type="GO" id="GO:0042866">
    <property type="term" value="P:pyruvate biosynthetic process"/>
    <property type="evidence" value="ECO:0007669"/>
    <property type="project" value="UniProtKB-UniRule"/>
</dbReference>
<dbReference type="GO" id="GO:0006744">
    <property type="term" value="P:ubiquinone biosynthetic process"/>
    <property type="evidence" value="ECO:0007669"/>
    <property type="project" value="UniProtKB-UniRule"/>
</dbReference>
<dbReference type="Gene3D" id="3.40.1410.10">
    <property type="entry name" value="Chorismate lyase-like"/>
    <property type="match status" value="1"/>
</dbReference>
<dbReference type="HAMAP" id="MF_01632">
    <property type="entry name" value="UbiC"/>
    <property type="match status" value="1"/>
</dbReference>
<dbReference type="InterPro" id="IPR007440">
    <property type="entry name" value="Chorismate--pyruvate_lyase"/>
</dbReference>
<dbReference type="InterPro" id="IPR028978">
    <property type="entry name" value="Chorismate_lyase_/UTRA_dom_sf"/>
</dbReference>
<dbReference type="PANTHER" id="PTHR38683">
    <property type="entry name" value="CHORISMATE PYRUVATE-LYASE"/>
    <property type="match status" value="1"/>
</dbReference>
<dbReference type="PANTHER" id="PTHR38683:SF1">
    <property type="entry name" value="CHORISMATE PYRUVATE-LYASE"/>
    <property type="match status" value="1"/>
</dbReference>
<dbReference type="Pfam" id="PF04345">
    <property type="entry name" value="Chor_lyase"/>
    <property type="match status" value="1"/>
</dbReference>
<dbReference type="SUPFAM" id="SSF64288">
    <property type="entry name" value="Chorismate lyase-like"/>
    <property type="match status" value="1"/>
</dbReference>
<organism>
    <name type="scientific">Pseudomonas syringae pv. tomato (strain ATCC BAA-871 / DC3000)</name>
    <dbReference type="NCBI Taxonomy" id="223283"/>
    <lineage>
        <taxon>Bacteria</taxon>
        <taxon>Pseudomonadati</taxon>
        <taxon>Pseudomonadota</taxon>
        <taxon>Gammaproteobacteria</taxon>
        <taxon>Pseudomonadales</taxon>
        <taxon>Pseudomonadaceae</taxon>
        <taxon>Pseudomonas</taxon>
    </lineage>
</organism>
<name>UBIC_PSESM</name>
<comment type="function">
    <text evidence="1">Removes the pyruvyl group from chorismate, with concomitant aromatization of the ring, to provide 4-hydroxybenzoate (4HB) for the ubiquinone pathway.</text>
</comment>
<comment type="catalytic activity">
    <reaction evidence="1">
        <text>chorismate = 4-hydroxybenzoate + pyruvate</text>
        <dbReference type="Rhea" id="RHEA:16505"/>
        <dbReference type="ChEBI" id="CHEBI:15361"/>
        <dbReference type="ChEBI" id="CHEBI:17879"/>
        <dbReference type="ChEBI" id="CHEBI:29748"/>
        <dbReference type="EC" id="4.1.3.40"/>
    </reaction>
</comment>
<comment type="pathway">
    <text evidence="1">Cofactor biosynthesis; ubiquinone biosynthesis.</text>
</comment>
<comment type="subcellular location">
    <subcellularLocation>
        <location evidence="1">Cytoplasm</location>
    </subcellularLocation>
</comment>
<comment type="similarity">
    <text evidence="1">Belongs to the UbiC family.</text>
</comment>